<sequence length="447" mass="49757">MSTMTPAEIVSELDKHIIGQAKAKKAVAVALRNRWRRQQVAEPLRQEITPKNILMIGPTGVGKTEIARRLAKLADAPFIKIEATKFTEVGYVGRDVDSIVRDLIEISVKQTRETEMRKVRSKATDLAEDRILDVLLPQPRAVGFGASAEHANDDNNATRQTFRKRLREGQLDDKEIELDIEQPAVGMDIMAPPGMEEMTEQIRSMFSNLGSGKKQRRKVKIREALKLLTDEEAAKMLNDEEVKTKAVQNVEQNGIVFLDEIDKITSRNHEGGGGEVSRQGVQRDLLPLVEGTTINTKYGMVKTDHILFIASGAFHLAKPSDLIPELQGRFPIRVELDSLSVKDFEAILVATDASLVKQYQALLATEDVKLEFADDGIRRLAEIAYAVNEKTENIGARRLYTVIEKLLEEVSFAAGNHAGQSVTIDSAYVDRALGEVSKDEDLSRYVL</sequence>
<gene>
    <name evidence="1" type="primary">hslU</name>
    <name type="ordered locus">BMA3253</name>
</gene>
<feature type="chain" id="PRO_0000160490" description="ATP-dependent protease ATPase subunit HslU">
    <location>
        <begin position="1"/>
        <end position="447"/>
    </location>
</feature>
<feature type="binding site" evidence="1">
    <location>
        <position position="18"/>
    </location>
    <ligand>
        <name>ATP</name>
        <dbReference type="ChEBI" id="CHEBI:30616"/>
    </ligand>
</feature>
<feature type="binding site" evidence="1">
    <location>
        <begin position="60"/>
        <end position="65"/>
    </location>
    <ligand>
        <name>ATP</name>
        <dbReference type="ChEBI" id="CHEBI:30616"/>
    </ligand>
</feature>
<feature type="binding site" evidence="1">
    <location>
        <position position="259"/>
    </location>
    <ligand>
        <name>ATP</name>
        <dbReference type="ChEBI" id="CHEBI:30616"/>
    </ligand>
</feature>
<feature type="binding site" evidence="1">
    <location>
        <position position="325"/>
    </location>
    <ligand>
        <name>ATP</name>
        <dbReference type="ChEBI" id="CHEBI:30616"/>
    </ligand>
</feature>
<feature type="binding site" evidence="1">
    <location>
        <position position="397"/>
    </location>
    <ligand>
        <name>ATP</name>
        <dbReference type="ChEBI" id="CHEBI:30616"/>
    </ligand>
</feature>
<proteinExistence type="inferred from homology"/>
<organism>
    <name type="scientific">Burkholderia mallei (strain ATCC 23344)</name>
    <dbReference type="NCBI Taxonomy" id="243160"/>
    <lineage>
        <taxon>Bacteria</taxon>
        <taxon>Pseudomonadati</taxon>
        <taxon>Pseudomonadota</taxon>
        <taxon>Betaproteobacteria</taxon>
        <taxon>Burkholderiales</taxon>
        <taxon>Burkholderiaceae</taxon>
        <taxon>Burkholderia</taxon>
        <taxon>pseudomallei group</taxon>
    </lineage>
</organism>
<reference key="1">
    <citation type="journal article" date="2004" name="Proc. Natl. Acad. Sci. U.S.A.">
        <title>Structural flexibility in the Burkholderia mallei genome.</title>
        <authorList>
            <person name="Nierman W.C."/>
            <person name="DeShazer D."/>
            <person name="Kim H.S."/>
            <person name="Tettelin H."/>
            <person name="Nelson K.E."/>
            <person name="Feldblyum T.V."/>
            <person name="Ulrich R.L."/>
            <person name="Ronning C.M."/>
            <person name="Brinkac L.M."/>
            <person name="Daugherty S.C."/>
            <person name="Davidsen T.D."/>
            <person name="DeBoy R.T."/>
            <person name="Dimitrov G."/>
            <person name="Dodson R.J."/>
            <person name="Durkin A.S."/>
            <person name="Gwinn M.L."/>
            <person name="Haft D.H."/>
            <person name="Khouri H.M."/>
            <person name="Kolonay J.F."/>
            <person name="Madupu R."/>
            <person name="Mohammoud Y."/>
            <person name="Nelson W.C."/>
            <person name="Radune D."/>
            <person name="Romero C.M."/>
            <person name="Sarria S."/>
            <person name="Selengut J."/>
            <person name="Shamblin C."/>
            <person name="Sullivan S.A."/>
            <person name="White O."/>
            <person name="Yu Y."/>
            <person name="Zafar N."/>
            <person name="Zhou L."/>
            <person name="Fraser C.M."/>
        </authorList>
    </citation>
    <scope>NUCLEOTIDE SEQUENCE [LARGE SCALE GENOMIC DNA]</scope>
    <source>
        <strain>ATCC 23344</strain>
    </source>
</reference>
<name>HSLU_BURMA</name>
<accession>Q62F00</accession>
<evidence type="ECO:0000255" key="1">
    <source>
        <dbReference type="HAMAP-Rule" id="MF_00249"/>
    </source>
</evidence>
<protein>
    <recommendedName>
        <fullName evidence="1">ATP-dependent protease ATPase subunit HslU</fullName>
    </recommendedName>
    <alternativeName>
        <fullName evidence="1">Unfoldase HslU</fullName>
    </alternativeName>
</protein>
<dbReference type="EMBL" id="CP000010">
    <property type="protein sequence ID" value="AAU48468.1"/>
    <property type="molecule type" value="Genomic_DNA"/>
</dbReference>
<dbReference type="RefSeq" id="WP_004198316.1">
    <property type="nucleotide sequence ID" value="NC_006348.1"/>
</dbReference>
<dbReference type="RefSeq" id="YP_104727.1">
    <property type="nucleotide sequence ID" value="NC_006348.1"/>
</dbReference>
<dbReference type="SMR" id="Q62F00"/>
<dbReference type="GeneID" id="93058712"/>
<dbReference type="KEGG" id="bma:BMA3253"/>
<dbReference type="PATRIC" id="fig|243160.12.peg.3334"/>
<dbReference type="eggNOG" id="COG1220">
    <property type="taxonomic scope" value="Bacteria"/>
</dbReference>
<dbReference type="HOGENOM" id="CLU_033123_0_0_4"/>
<dbReference type="Proteomes" id="UP000006693">
    <property type="component" value="Chromosome 1"/>
</dbReference>
<dbReference type="GO" id="GO:0009376">
    <property type="term" value="C:HslUV protease complex"/>
    <property type="evidence" value="ECO:0007669"/>
    <property type="project" value="UniProtKB-UniRule"/>
</dbReference>
<dbReference type="GO" id="GO:0005524">
    <property type="term" value="F:ATP binding"/>
    <property type="evidence" value="ECO:0007669"/>
    <property type="project" value="UniProtKB-UniRule"/>
</dbReference>
<dbReference type="GO" id="GO:0016887">
    <property type="term" value="F:ATP hydrolysis activity"/>
    <property type="evidence" value="ECO:0007669"/>
    <property type="project" value="InterPro"/>
</dbReference>
<dbReference type="GO" id="GO:0008233">
    <property type="term" value="F:peptidase activity"/>
    <property type="evidence" value="ECO:0007669"/>
    <property type="project" value="InterPro"/>
</dbReference>
<dbReference type="GO" id="GO:0036402">
    <property type="term" value="F:proteasome-activating activity"/>
    <property type="evidence" value="ECO:0007669"/>
    <property type="project" value="UniProtKB-UniRule"/>
</dbReference>
<dbReference type="GO" id="GO:0043335">
    <property type="term" value="P:protein unfolding"/>
    <property type="evidence" value="ECO:0007669"/>
    <property type="project" value="UniProtKB-UniRule"/>
</dbReference>
<dbReference type="GO" id="GO:0051603">
    <property type="term" value="P:proteolysis involved in protein catabolic process"/>
    <property type="evidence" value="ECO:0007669"/>
    <property type="project" value="TreeGrafter"/>
</dbReference>
<dbReference type="CDD" id="cd19498">
    <property type="entry name" value="RecA-like_HslU"/>
    <property type="match status" value="1"/>
</dbReference>
<dbReference type="FunFam" id="3.40.50.300:FF:000213">
    <property type="entry name" value="ATP-dependent protease ATPase subunit HslU"/>
    <property type="match status" value="1"/>
</dbReference>
<dbReference type="FunFam" id="3.40.50.300:FF:000220">
    <property type="entry name" value="ATP-dependent protease ATPase subunit HslU"/>
    <property type="match status" value="1"/>
</dbReference>
<dbReference type="Gene3D" id="1.10.8.60">
    <property type="match status" value="1"/>
</dbReference>
<dbReference type="Gene3D" id="1.10.8.10">
    <property type="entry name" value="DNA helicase RuvA subunit, C-terminal domain"/>
    <property type="match status" value="2"/>
</dbReference>
<dbReference type="Gene3D" id="3.40.50.300">
    <property type="entry name" value="P-loop containing nucleotide triphosphate hydrolases"/>
    <property type="match status" value="2"/>
</dbReference>
<dbReference type="HAMAP" id="MF_00249">
    <property type="entry name" value="HslU"/>
    <property type="match status" value="1"/>
</dbReference>
<dbReference type="InterPro" id="IPR003593">
    <property type="entry name" value="AAA+_ATPase"/>
</dbReference>
<dbReference type="InterPro" id="IPR050052">
    <property type="entry name" value="ATP-dep_Clp_protease_ClpX"/>
</dbReference>
<dbReference type="InterPro" id="IPR003959">
    <property type="entry name" value="ATPase_AAA_core"/>
</dbReference>
<dbReference type="InterPro" id="IPR019489">
    <property type="entry name" value="Clp_ATPase_C"/>
</dbReference>
<dbReference type="InterPro" id="IPR004491">
    <property type="entry name" value="HslU"/>
</dbReference>
<dbReference type="InterPro" id="IPR027417">
    <property type="entry name" value="P-loop_NTPase"/>
</dbReference>
<dbReference type="NCBIfam" id="TIGR00390">
    <property type="entry name" value="hslU"/>
    <property type="match status" value="1"/>
</dbReference>
<dbReference type="NCBIfam" id="NF003544">
    <property type="entry name" value="PRK05201.1"/>
    <property type="match status" value="1"/>
</dbReference>
<dbReference type="PANTHER" id="PTHR48102">
    <property type="entry name" value="ATP-DEPENDENT CLP PROTEASE ATP-BINDING SUBUNIT CLPX-LIKE, MITOCHONDRIAL-RELATED"/>
    <property type="match status" value="1"/>
</dbReference>
<dbReference type="PANTHER" id="PTHR48102:SF3">
    <property type="entry name" value="ATP-DEPENDENT PROTEASE ATPASE SUBUNIT HSLU"/>
    <property type="match status" value="1"/>
</dbReference>
<dbReference type="Pfam" id="PF00004">
    <property type="entry name" value="AAA"/>
    <property type="match status" value="1"/>
</dbReference>
<dbReference type="Pfam" id="PF07724">
    <property type="entry name" value="AAA_2"/>
    <property type="match status" value="1"/>
</dbReference>
<dbReference type="SMART" id="SM00382">
    <property type="entry name" value="AAA"/>
    <property type="match status" value="1"/>
</dbReference>
<dbReference type="SMART" id="SM01086">
    <property type="entry name" value="ClpB_D2-small"/>
    <property type="match status" value="1"/>
</dbReference>
<dbReference type="SUPFAM" id="SSF52540">
    <property type="entry name" value="P-loop containing nucleoside triphosphate hydrolases"/>
    <property type="match status" value="1"/>
</dbReference>
<keyword id="KW-0067">ATP-binding</keyword>
<keyword id="KW-0143">Chaperone</keyword>
<keyword id="KW-0963">Cytoplasm</keyword>
<keyword id="KW-0547">Nucleotide-binding</keyword>
<keyword id="KW-1185">Reference proteome</keyword>
<comment type="function">
    <text evidence="1">ATPase subunit of a proteasome-like degradation complex; this subunit has chaperone activity. The binding of ATP and its subsequent hydrolysis by HslU are essential for unfolding of protein substrates subsequently hydrolyzed by HslV. HslU recognizes the N-terminal part of its protein substrates and unfolds these before they are guided to HslV for hydrolysis.</text>
</comment>
<comment type="subunit">
    <text evidence="1">A double ring-shaped homohexamer of HslV is capped on each side by a ring-shaped HslU homohexamer. The assembly of the HslU/HslV complex is dependent on binding of ATP.</text>
</comment>
<comment type="subcellular location">
    <subcellularLocation>
        <location evidence="1">Cytoplasm</location>
    </subcellularLocation>
</comment>
<comment type="similarity">
    <text evidence="1">Belongs to the ClpX chaperone family. HslU subfamily.</text>
</comment>